<gene>
    <name evidence="1" type="primary">lysS</name>
    <name type="synonym">pam589</name>
    <name type="ordered locus">PAM_589</name>
</gene>
<name>SYK_ONYPE</name>
<reference key="1">
    <citation type="journal article" date="2004" name="Nat. Genet.">
        <title>Reductive evolution suggested from the complete genome sequence of a plant-pathogenic phytoplasma.</title>
        <authorList>
            <person name="Oshima K."/>
            <person name="Kakizawa S."/>
            <person name="Nishigawa H."/>
            <person name="Jung H.-Y."/>
            <person name="Wei W."/>
            <person name="Suzuki S."/>
            <person name="Arashida R."/>
            <person name="Nakata D."/>
            <person name="Miyata S."/>
            <person name="Ugaki M."/>
            <person name="Namba S."/>
        </authorList>
    </citation>
    <scope>NUCLEOTIDE SEQUENCE [LARGE SCALE GENOMIC DNA]</scope>
    <source>
        <strain>OY-M</strain>
    </source>
</reference>
<evidence type="ECO:0000255" key="1">
    <source>
        <dbReference type="HAMAP-Rule" id="MF_00252"/>
    </source>
</evidence>
<accession>Q6YPY6</accession>
<sequence>MATKLSEQEIIRHQKMNELKKINIDPFGKKFVPSHSIEQILLQYQKADSLALEQSQIHVCVAGRIVLKRGQGKAGFLHLQDFNFRMQAYIKLDLVGKDAFQIYQNCDLGDIIGIKGFLFKTKTQELTIKALEFIHLTKALKPLPDKFHGLQNREEMRKNRYVDLIVNEKTRQVFLTRSLIMKYIRNFFDNQGFLEVETPILQPTLGGASAKPFITHHNALNCDFYLRIATELPLKKLIVGGMNKVYEIGRLFRNEGIDATHNPEFSTIEAYLAYADMQDIMDLTKQCLQELAQKLFGKLQFTYQNQEIDFSHFAKVSMVASIKEKTGIDFTDNFTLEQCLSLAKKHQIEVMPHFSQGHIIEAFFGKYVENTLIQPTFVYGHPLEISPLAKQNEADPRFTDRFELFIVGKEFANAFSELNDPIEQEKRFLNQLQQKQLGNDEANDMDYDFLNALNYGMPPTGGLGMGLDRLVMLLTDTANIRDVILFPHCKNQNKFSQNKTANKVLTNNDNE</sequence>
<organism>
    <name type="scientific">Onion yellows phytoplasma (strain OY-M)</name>
    <dbReference type="NCBI Taxonomy" id="262768"/>
    <lineage>
        <taxon>Bacteria</taxon>
        <taxon>Bacillati</taxon>
        <taxon>Mycoplasmatota</taxon>
        <taxon>Mollicutes</taxon>
        <taxon>Acholeplasmatales</taxon>
        <taxon>Acholeplasmataceae</taxon>
        <taxon>Candidatus Phytoplasma</taxon>
        <taxon>16SrI (Aster yellows group)</taxon>
    </lineage>
</organism>
<proteinExistence type="inferred from homology"/>
<dbReference type="EC" id="6.1.1.6" evidence="1"/>
<dbReference type="EMBL" id="AP006628">
    <property type="protein sequence ID" value="BAD04674.1"/>
    <property type="molecule type" value="Genomic_DNA"/>
</dbReference>
<dbReference type="SMR" id="Q6YPY6"/>
<dbReference type="STRING" id="262768.PAM_589"/>
<dbReference type="KEGG" id="poy:PAM_589"/>
<dbReference type="eggNOG" id="COG1190">
    <property type="taxonomic scope" value="Bacteria"/>
</dbReference>
<dbReference type="HOGENOM" id="CLU_008255_6_0_14"/>
<dbReference type="BioCyc" id="OYEL262768:G1G26-714-MONOMER"/>
<dbReference type="Proteomes" id="UP000002523">
    <property type="component" value="Chromosome"/>
</dbReference>
<dbReference type="GO" id="GO:0005829">
    <property type="term" value="C:cytosol"/>
    <property type="evidence" value="ECO:0007669"/>
    <property type="project" value="TreeGrafter"/>
</dbReference>
<dbReference type="GO" id="GO:0005524">
    <property type="term" value="F:ATP binding"/>
    <property type="evidence" value="ECO:0007669"/>
    <property type="project" value="UniProtKB-UniRule"/>
</dbReference>
<dbReference type="GO" id="GO:0004824">
    <property type="term" value="F:lysine-tRNA ligase activity"/>
    <property type="evidence" value="ECO:0007669"/>
    <property type="project" value="UniProtKB-UniRule"/>
</dbReference>
<dbReference type="GO" id="GO:0000287">
    <property type="term" value="F:magnesium ion binding"/>
    <property type="evidence" value="ECO:0007669"/>
    <property type="project" value="UniProtKB-UniRule"/>
</dbReference>
<dbReference type="GO" id="GO:0000049">
    <property type="term" value="F:tRNA binding"/>
    <property type="evidence" value="ECO:0007669"/>
    <property type="project" value="TreeGrafter"/>
</dbReference>
<dbReference type="GO" id="GO:0006430">
    <property type="term" value="P:lysyl-tRNA aminoacylation"/>
    <property type="evidence" value="ECO:0007669"/>
    <property type="project" value="UniProtKB-UniRule"/>
</dbReference>
<dbReference type="CDD" id="cd00775">
    <property type="entry name" value="LysRS_core"/>
    <property type="match status" value="1"/>
</dbReference>
<dbReference type="CDD" id="cd04322">
    <property type="entry name" value="LysRS_N"/>
    <property type="match status" value="1"/>
</dbReference>
<dbReference type="FunFam" id="2.40.50.140:FF:000024">
    <property type="entry name" value="Lysine--tRNA ligase"/>
    <property type="match status" value="1"/>
</dbReference>
<dbReference type="Gene3D" id="3.30.930.10">
    <property type="entry name" value="Bira Bifunctional Protein, Domain 2"/>
    <property type="match status" value="1"/>
</dbReference>
<dbReference type="Gene3D" id="2.40.50.140">
    <property type="entry name" value="Nucleic acid-binding proteins"/>
    <property type="match status" value="1"/>
</dbReference>
<dbReference type="HAMAP" id="MF_00252">
    <property type="entry name" value="Lys_tRNA_synth_class2"/>
    <property type="match status" value="1"/>
</dbReference>
<dbReference type="InterPro" id="IPR004364">
    <property type="entry name" value="Aa-tRNA-synt_II"/>
</dbReference>
<dbReference type="InterPro" id="IPR006195">
    <property type="entry name" value="aa-tRNA-synth_II"/>
</dbReference>
<dbReference type="InterPro" id="IPR045864">
    <property type="entry name" value="aa-tRNA-synth_II/BPL/LPL"/>
</dbReference>
<dbReference type="InterPro" id="IPR002313">
    <property type="entry name" value="Lys-tRNA-ligase_II"/>
</dbReference>
<dbReference type="InterPro" id="IPR044136">
    <property type="entry name" value="Lys-tRNA-ligase_II_N"/>
</dbReference>
<dbReference type="InterPro" id="IPR018149">
    <property type="entry name" value="Lys-tRNA-synth_II_C"/>
</dbReference>
<dbReference type="InterPro" id="IPR012340">
    <property type="entry name" value="NA-bd_OB-fold"/>
</dbReference>
<dbReference type="InterPro" id="IPR004365">
    <property type="entry name" value="NA-bd_OB_tRNA"/>
</dbReference>
<dbReference type="NCBIfam" id="TIGR00499">
    <property type="entry name" value="lysS_bact"/>
    <property type="match status" value="1"/>
</dbReference>
<dbReference type="NCBIfam" id="NF001756">
    <property type="entry name" value="PRK00484.1"/>
    <property type="match status" value="1"/>
</dbReference>
<dbReference type="PANTHER" id="PTHR42918:SF15">
    <property type="entry name" value="LYSINE--TRNA LIGASE, CHLOROPLASTIC_MITOCHONDRIAL"/>
    <property type="match status" value="1"/>
</dbReference>
<dbReference type="PANTHER" id="PTHR42918">
    <property type="entry name" value="LYSYL-TRNA SYNTHETASE"/>
    <property type="match status" value="1"/>
</dbReference>
<dbReference type="Pfam" id="PF00152">
    <property type="entry name" value="tRNA-synt_2"/>
    <property type="match status" value="1"/>
</dbReference>
<dbReference type="Pfam" id="PF01336">
    <property type="entry name" value="tRNA_anti-codon"/>
    <property type="match status" value="1"/>
</dbReference>
<dbReference type="PRINTS" id="PR00982">
    <property type="entry name" value="TRNASYNTHLYS"/>
</dbReference>
<dbReference type="SUPFAM" id="SSF55681">
    <property type="entry name" value="Class II aaRS and biotin synthetases"/>
    <property type="match status" value="1"/>
</dbReference>
<dbReference type="SUPFAM" id="SSF50249">
    <property type="entry name" value="Nucleic acid-binding proteins"/>
    <property type="match status" value="1"/>
</dbReference>
<dbReference type="PROSITE" id="PS50862">
    <property type="entry name" value="AA_TRNA_LIGASE_II"/>
    <property type="match status" value="1"/>
</dbReference>
<comment type="catalytic activity">
    <reaction evidence="1">
        <text>tRNA(Lys) + L-lysine + ATP = L-lysyl-tRNA(Lys) + AMP + diphosphate</text>
        <dbReference type="Rhea" id="RHEA:20792"/>
        <dbReference type="Rhea" id="RHEA-COMP:9696"/>
        <dbReference type="Rhea" id="RHEA-COMP:9697"/>
        <dbReference type="ChEBI" id="CHEBI:30616"/>
        <dbReference type="ChEBI" id="CHEBI:32551"/>
        <dbReference type="ChEBI" id="CHEBI:33019"/>
        <dbReference type="ChEBI" id="CHEBI:78442"/>
        <dbReference type="ChEBI" id="CHEBI:78529"/>
        <dbReference type="ChEBI" id="CHEBI:456215"/>
        <dbReference type="EC" id="6.1.1.6"/>
    </reaction>
</comment>
<comment type="cofactor">
    <cofactor evidence="1">
        <name>Mg(2+)</name>
        <dbReference type="ChEBI" id="CHEBI:18420"/>
    </cofactor>
    <text evidence="1">Binds 3 Mg(2+) ions per subunit.</text>
</comment>
<comment type="subunit">
    <text evidence="1">Homodimer.</text>
</comment>
<comment type="subcellular location">
    <subcellularLocation>
        <location evidence="1">Cytoplasm</location>
    </subcellularLocation>
</comment>
<comment type="similarity">
    <text evidence="1">Belongs to the class-II aminoacyl-tRNA synthetase family.</text>
</comment>
<protein>
    <recommendedName>
        <fullName evidence="1">Lysine--tRNA ligase</fullName>
        <ecNumber evidence="1">6.1.1.6</ecNumber>
    </recommendedName>
    <alternativeName>
        <fullName evidence="1">Lysyl-tRNA synthetase</fullName>
        <shortName evidence="1">LysRS</shortName>
    </alternativeName>
</protein>
<keyword id="KW-0030">Aminoacyl-tRNA synthetase</keyword>
<keyword id="KW-0067">ATP-binding</keyword>
<keyword id="KW-0963">Cytoplasm</keyword>
<keyword id="KW-0436">Ligase</keyword>
<keyword id="KW-0460">Magnesium</keyword>
<keyword id="KW-0479">Metal-binding</keyword>
<keyword id="KW-0547">Nucleotide-binding</keyword>
<keyword id="KW-0648">Protein biosynthesis</keyword>
<feature type="chain" id="PRO_1000199246" description="Lysine--tRNA ligase">
    <location>
        <begin position="1"/>
        <end position="511"/>
    </location>
</feature>
<feature type="binding site" evidence="1">
    <location>
        <position position="403"/>
    </location>
    <ligand>
        <name>Mg(2+)</name>
        <dbReference type="ChEBI" id="CHEBI:18420"/>
        <label>1</label>
    </ligand>
</feature>
<feature type="binding site" evidence="1">
    <location>
        <position position="410"/>
    </location>
    <ligand>
        <name>Mg(2+)</name>
        <dbReference type="ChEBI" id="CHEBI:18420"/>
        <label>1</label>
    </ligand>
</feature>
<feature type="binding site" evidence="1">
    <location>
        <position position="410"/>
    </location>
    <ligand>
        <name>Mg(2+)</name>
        <dbReference type="ChEBI" id="CHEBI:18420"/>
        <label>2</label>
    </ligand>
</feature>